<dbReference type="EC" id="4.1.99.17" evidence="1"/>
<dbReference type="EMBL" id="AE009950">
    <property type="protein sequence ID" value="AAL81655.1"/>
    <property type="molecule type" value="Genomic_DNA"/>
</dbReference>
<dbReference type="RefSeq" id="WP_011012678.1">
    <property type="nucleotide sequence ID" value="NZ_CP023154.1"/>
</dbReference>
<dbReference type="SMR" id="Q8U0Q4"/>
<dbReference type="STRING" id="186497.PF1531"/>
<dbReference type="PaxDb" id="186497-PF1531"/>
<dbReference type="GeneID" id="41713350"/>
<dbReference type="KEGG" id="pfu:PF1531"/>
<dbReference type="PATRIC" id="fig|186497.12.peg.1596"/>
<dbReference type="eggNOG" id="arCOG02741">
    <property type="taxonomic scope" value="Archaea"/>
</dbReference>
<dbReference type="HOGENOM" id="CLU_013181_2_2_2"/>
<dbReference type="OrthoDB" id="335406at2157"/>
<dbReference type="PhylomeDB" id="Q8U0Q4"/>
<dbReference type="UniPathway" id="UPA00060"/>
<dbReference type="Proteomes" id="UP000001013">
    <property type="component" value="Chromosome"/>
</dbReference>
<dbReference type="GO" id="GO:0051539">
    <property type="term" value="F:4 iron, 4 sulfur cluster binding"/>
    <property type="evidence" value="ECO:0007669"/>
    <property type="project" value="UniProtKB-KW"/>
</dbReference>
<dbReference type="GO" id="GO:0016830">
    <property type="term" value="F:carbon-carbon lyase activity"/>
    <property type="evidence" value="ECO:0007669"/>
    <property type="project" value="InterPro"/>
</dbReference>
<dbReference type="GO" id="GO:0008270">
    <property type="term" value="F:zinc ion binding"/>
    <property type="evidence" value="ECO:0007669"/>
    <property type="project" value="UniProtKB-UniRule"/>
</dbReference>
<dbReference type="GO" id="GO:0009228">
    <property type="term" value="P:thiamine biosynthetic process"/>
    <property type="evidence" value="ECO:0007669"/>
    <property type="project" value="UniProtKB-KW"/>
</dbReference>
<dbReference type="GO" id="GO:0009229">
    <property type="term" value="P:thiamine diphosphate biosynthetic process"/>
    <property type="evidence" value="ECO:0007669"/>
    <property type="project" value="UniProtKB-UniRule"/>
</dbReference>
<dbReference type="FunFam" id="3.20.20.540:FF:000001">
    <property type="entry name" value="Phosphomethylpyrimidine synthase"/>
    <property type="match status" value="1"/>
</dbReference>
<dbReference type="Gene3D" id="3.20.20.540">
    <property type="entry name" value="Radical SAM ThiC family, central domain"/>
    <property type="match status" value="1"/>
</dbReference>
<dbReference type="HAMAP" id="MF_00089">
    <property type="entry name" value="ThiC"/>
    <property type="match status" value="1"/>
</dbReference>
<dbReference type="InterPro" id="IPR037509">
    <property type="entry name" value="ThiC"/>
</dbReference>
<dbReference type="InterPro" id="IPR038521">
    <property type="entry name" value="ThiC/Bza_core_dom"/>
</dbReference>
<dbReference type="InterPro" id="IPR002817">
    <property type="entry name" value="ThiC/BzaA/B"/>
</dbReference>
<dbReference type="NCBIfam" id="NF009895">
    <property type="entry name" value="PRK13352.1"/>
    <property type="match status" value="1"/>
</dbReference>
<dbReference type="NCBIfam" id="TIGR00190">
    <property type="entry name" value="thiC"/>
    <property type="match status" value="1"/>
</dbReference>
<dbReference type="PANTHER" id="PTHR30557:SF1">
    <property type="entry name" value="PHOSPHOMETHYLPYRIMIDINE SYNTHASE, CHLOROPLASTIC"/>
    <property type="match status" value="1"/>
</dbReference>
<dbReference type="PANTHER" id="PTHR30557">
    <property type="entry name" value="THIAMINE BIOSYNTHESIS PROTEIN THIC"/>
    <property type="match status" value="1"/>
</dbReference>
<dbReference type="Pfam" id="PF01964">
    <property type="entry name" value="ThiC_Rad_SAM"/>
    <property type="match status" value="1"/>
</dbReference>
<dbReference type="SFLD" id="SFLDF00407">
    <property type="entry name" value="phosphomethylpyrimidine_syntha"/>
    <property type="match status" value="1"/>
</dbReference>
<dbReference type="SFLD" id="SFLDG01114">
    <property type="entry name" value="phosphomethylpyrimidine_syntha"/>
    <property type="match status" value="1"/>
</dbReference>
<dbReference type="SFLD" id="SFLDS00113">
    <property type="entry name" value="Radical_SAM_Phosphomethylpyrim"/>
    <property type="match status" value="1"/>
</dbReference>
<proteinExistence type="inferred from homology"/>
<sequence>MTQMEEAKRGVITEEMKKIAKIEKIDPEKLRRSVAKGHTVIFRNVNHDWVVPVAVGQGVRVKVNANIGTSRDIVNVEEEIEKAKIAVKYGADTIMDLSTGGDLDFIRRKIMKAVNVPVGTVPIYQAAEEMLARGKAIIEMTEDDMWKAVEKHFKDGVDFVTIHAGVTKEVVEKLKRVNRVVGMVSRGGTFLAAWILHWGEENPFYKNYEYLLELAKEYDVVLSLGDGLRPGGLPDAGDELQIAELYTIGRLVKRAREFGVQTMVEGPGHVPIDQIPTHIRLMKIASDNAPVYVLGPIVTDIFPGYDHISAAIGGAIAALNGADFLCYVTPAEHLGLPTIEHVKEGVIATKIAAHAVNLTRFEEDFKIDYQMSLARGKLNWKEQFKIAFDKEKFIEIRKERPTKSEACSMCGDLCAIKIVREMLGHKARS</sequence>
<accession>Q8U0Q4</accession>
<name>THIC_PYRFU</name>
<reference key="1">
    <citation type="journal article" date="1999" name="Genetics">
        <title>Divergence of the hyperthermophilic archaea Pyrococcus furiosus and P. horikoshii inferred from complete genomic sequences.</title>
        <authorList>
            <person name="Maeder D.L."/>
            <person name="Weiss R.B."/>
            <person name="Dunn D.M."/>
            <person name="Cherry J.L."/>
            <person name="Gonzalez J.M."/>
            <person name="DiRuggiero J."/>
            <person name="Robb F.T."/>
        </authorList>
    </citation>
    <scope>NUCLEOTIDE SEQUENCE [LARGE SCALE GENOMIC DNA]</scope>
    <source>
        <strain>ATCC 43587 / DSM 3638 / JCM 8422 / Vc1</strain>
    </source>
</reference>
<gene>
    <name evidence="1" type="primary">thiC</name>
    <name type="ordered locus">PF1531</name>
</gene>
<organism>
    <name type="scientific">Pyrococcus furiosus (strain ATCC 43587 / DSM 3638 / JCM 8422 / Vc1)</name>
    <dbReference type="NCBI Taxonomy" id="186497"/>
    <lineage>
        <taxon>Archaea</taxon>
        <taxon>Methanobacteriati</taxon>
        <taxon>Methanobacteriota</taxon>
        <taxon>Thermococci</taxon>
        <taxon>Thermococcales</taxon>
        <taxon>Thermococcaceae</taxon>
        <taxon>Pyrococcus</taxon>
    </lineage>
</organism>
<feature type="chain" id="PRO_0000152871" description="Phosphomethylpyrimidine synthase">
    <location>
        <begin position="1"/>
        <end position="429"/>
    </location>
</feature>
<feature type="binding site" evidence="1">
    <location>
        <position position="66"/>
    </location>
    <ligand>
        <name>substrate</name>
    </ligand>
</feature>
<feature type="binding site" evidence="1">
    <location>
        <position position="95"/>
    </location>
    <ligand>
        <name>substrate</name>
    </ligand>
</feature>
<feature type="binding site" evidence="1">
    <location>
        <position position="124"/>
    </location>
    <ligand>
        <name>substrate</name>
    </ligand>
</feature>
<feature type="binding site" evidence="1">
    <location>
        <position position="163"/>
    </location>
    <ligand>
        <name>substrate</name>
    </ligand>
</feature>
<feature type="binding site" evidence="1">
    <location>
        <begin position="185"/>
        <end position="187"/>
    </location>
    <ligand>
        <name>substrate</name>
    </ligand>
</feature>
<feature type="binding site" evidence="1">
    <location>
        <begin position="226"/>
        <end position="229"/>
    </location>
    <ligand>
        <name>substrate</name>
    </ligand>
</feature>
<feature type="binding site" evidence="1">
    <location>
        <position position="265"/>
    </location>
    <ligand>
        <name>substrate</name>
    </ligand>
</feature>
<feature type="binding site" evidence="1">
    <location>
        <position position="269"/>
    </location>
    <ligand>
        <name>Zn(2+)</name>
        <dbReference type="ChEBI" id="CHEBI:29105"/>
    </ligand>
</feature>
<feature type="binding site" evidence="1">
    <location>
        <position position="292"/>
    </location>
    <ligand>
        <name>substrate</name>
    </ligand>
</feature>
<feature type="binding site" evidence="1">
    <location>
        <position position="333"/>
    </location>
    <ligand>
        <name>Zn(2+)</name>
        <dbReference type="ChEBI" id="CHEBI:29105"/>
    </ligand>
</feature>
<feature type="binding site" evidence="1">
    <location>
        <position position="407"/>
    </location>
    <ligand>
        <name>[4Fe-4S] cluster</name>
        <dbReference type="ChEBI" id="CHEBI:49883"/>
        <note>4Fe-4S-S-AdoMet</note>
    </ligand>
</feature>
<feature type="binding site" evidence="1">
    <location>
        <position position="410"/>
    </location>
    <ligand>
        <name>[4Fe-4S] cluster</name>
        <dbReference type="ChEBI" id="CHEBI:49883"/>
        <note>4Fe-4S-S-AdoMet</note>
    </ligand>
</feature>
<feature type="binding site" evidence="1">
    <location>
        <position position="414"/>
    </location>
    <ligand>
        <name>[4Fe-4S] cluster</name>
        <dbReference type="ChEBI" id="CHEBI:49883"/>
        <note>4Fe-4S-S-AdoMet</note>
    </ligand>
</feature>
<protein>
    <recommendedName>
        <fullName evidence="1">Phosphomethylpyrimidine synthase</fullName>
        <ecNumber evidence="1">4.1.99.17</ecNumber>
    </recommendedName>
    <alternativeName>
        <fullName evidence="1">Hydroxymethylpyrimidine phosphate synthase</fullName>
        <shortName evidence="1">HMP-P synthase</shortName>
        <shortName evidence="1">HMP-phosphate synthase</shortName>
        <shortName evidence="1">HMPP synthase</shortName>
    </alternativeName>
    <alternativeName>
        <fullName evidence="1">Thiamine biosynthesis protein ThiC</fullName>
    </alternativeName>
</protein>
<evidence type="ECO:0000255" key="1">
    <source>
        <dbReference type="HAMAP-Rule" id="MF_00089"/>
    </source>
</evidence>
<comment type="function">
    <text evidence="1">Catalyzes the synthesis of the hydroxymethylpyrimidine phosphate (HMP-P) moiety of thiamine from aminoimidazole ribotide (AIR) in a radical S-adenosyl-L-methionine (SAM)-dependent reaction.</text>
</comment>
<comment type="catalytic activity">
    <reaction evidence="1">
        <text>5-amino-1-(5-phospho-beta-D-ribosyl)imidazole + S-adenosyl-L-methionine = 4-amino-2-methyl-5-(phosphooxymethyl)pyrimidine + CO + 5'-deoxyadenosine + formate + L-methionine + 3 H(+)</text>
        <dbReference type="Rhea" id="RHEA:24840"/>
        <dbReference type="ChEBI" id="CHEBI:15378"/>
        <dbReference type="ChEBI" id="CHEBI:15740"/>
        <dbReference type="ChEBI" id="CHEBI:17245"/>
        <dbReference type="ChEBI" id="CHEBI:17319"/>
        <dbReference type="ChEBI" id="CHEBI:57844"/>
        <dbReference type="ChEBI" id="CHEBI:58354"/>
        <dbReference type="ChEBI" id="CHEBI:59789"/>
        <dbReference type="ChEBI" id="CHEBI:137981"/>
        <dbReference type="EC" id="4.1.99.17"/>
    </reaction>
</comment>
<comment type="cofactor">
    <cofactor evidence="1">
        <name>[4Fe-4S] cluster</name>
        <dbReference type="ChEBI" id="CHEBI:49883"/>
    </cofactor>
    <text evidence="1">Binds 1 [4Fe-4S] cluster per subunit. The cluster is coordinated with 3 cysteines and an exchangeable S-adenosyl-L-methionine.</text>
</comment>
<comment type="pathway">
    <text evidence="1">Cofactor biosynthesis; thiamine diphosphate biosynthesis.</text>
</comment>
<comment type="similarity">
    <text evidence="1">Belongs to the ThiC family.</text>
</comment>
<keyword id="KW-0004">4Fe-4S</keyword>
<keyword id="KW-0408">Iron</keyword>
<keyword id="KW-0411">Iron-sulfur</keyword>
<keyword id="KW-0456">Lyase</keyword>
<keyword id="KW-0479">Metal-binding</keyword>
<keyword id="KW-1185">Reference proteome</keyword>
<keyword id="KW-0949">S-adenosyl-L-methionine</keyword>
<keyword id="KW-0784">Thiamine biosynthesis</keyword>
<keyword id="KW-0862">Zinc</keyword>